<sequence>MVSGVSRNAARTSSGCIVALVSTDDDYTSQDVTTIPQAIRFPSSCLVTYSCVSCYLAIPSGKLHAASSFEHVLECTVAPVSEYVKSVFVGSSIECTGRSGSVTFALV</sequence>
<proteinExistence type="predicted"/>
<organism>
    <name type="scientific">Psalteriomonas lanterna</name>
    <name type="common">Amoeboflagellate</name>
    <dbReference type="NCBI Taxonomy" id="31290"/>
    <lineage>
        <taxon>Eukaryota</taxon>
        <taxon>Discoba</taxon>
        <taxon>Heterolobosea</taxon>
        <taxon>Tetramitia</taxon>
        <taxon>Eutetramitia</taxon>
        <taxon>Psalteriomonadidae</taxon>
        <taxon>Psalteriomonas</taxon>
    </lineage>
</organism>
<keyword id="KW-0001">2Fe-2S</keyword>
<keyword id="KW-0249">Electron transport</keyword>
<keyword id="KW-0377">Hydrogenosome</keyword>
<keyword id="KW-0408">Iron</keyword>
<keyword id="KW-0411">Iron-sulfur</keyword>
<keyword id="KW-0479">Metal-binding</keyword>
<keyword id="KW-0813">Transport</keyword>
<evidence type="ECO:0000250" key="1"/>
<reference key="1">
    <citation type="journal article" date="1994" name="Biochim. Biophys. Acta">
        <title>Molecular cloning of hydrogenosomal ferredoxin cDNA from the anaerobic amoeboflagellate Psalteriomonas lanterna.</title>
        <authorList>
            <person name="Brul S."/>
            <person name="Veltman R.H."/>
            <person name="Lombardo M.C.P."/>
            <person name="Vogels G.D."/>
        </authorList>
    </citation>
    <scope>NUCLEOTIDE SEQUENCE [MRNA]</scope>
    <source>
        <strain>Nijmegen</strain>
    </source>
</reference>
<comment type="function">
    <text>Ferredoxins are iron-sulfur proteins that transfer electrons in a wide variety of metabolic reactions.</text>
</comment>
<comment type="cofactor">
    <cofactor>
        <name>[2Fe-2S] cluster</name>
        <dbReference type="ChEBI" id="CHEBI:190135"/>
    </cofactor>
    <text>Binds 1 [2Fe-2S] cluster.</text>
</comment>
<comment type="subcellular location">
    <subcellularLocation>
        <location>Hydrogenosome</location>
    </subcellularLocation>
</comment>
<feature type="propeptide" id="PRO_0000008848">
    <location>
        <begin position="1"/>
        <end position="8"/>
    </location>
</feature>
<feature type="chain" id="PRO_0000008849" description="Ferredoxin">
    <location>
        <begin position="9"/>
        <end position="107"/>
    </location>
</feature>
<feature type="binding site" evidence="1">
    <location>
        <position position="45"/>
    </location>
    <ligand>
        <name>[2Fe-2S] cluster</name>
        <dbReference type="ChEBI" id="CHEBI:190135"/>
    </ligand>
</feature>
<feature type="binding site" evidence="1">
    <location>
        <position position="51"/>
    </location>
    <ligand>
        <name>[2Fe-2S] cluster</name>
        <dbReference type="ChEBI" id="CHEBI:190135"/>
    </ligand>
</feature>
<feature type="binding site" evidence="1">
    <location>
        <position position="54"/>
    </location>
    <ligand>
        <name>[2Fe-2S] cluster</name>
        <dbReference type="ChEBI" id="CHEBI:190135"/>
    </ligand>
</feature>
<dbReference type="EMBL" id="X74556">
    <property type="protein sequence ID" value="CAA52650.1"/>
    <property type="molecule type" value="mRNA"/>
</dbReference>
<dbReference type="PIR" id="S38566">
    <property type="entry name" value="S38566"/>
</dbReference>
<dbReference type="GO" id="GO:0042566">
    <property type="term" value="C:hydrogenosome"/>
    <property type="evidence" value="ECO:0007669"/>
    <property type="project" value="UniProtKB-SubCell"/>
</dbReference>
<dbReference type="GO" id="GO:0051537">
    <property type="term" value="F:2 iron, 2 sulfur cluster binding"/>
    <property type="evidence" value="ECO:0007669"/>
    <property type="project" value="UniProtKB-KW"/>
</dbReference>
<dbReference type="GO" id="GO:0046872">
    <property type="term" value="F:metal ion binding"/>
    <property type="evidence" value="ECO:0007669"/>
    <property type="project" value="UniProtKB-KW"/>
</dbReference>
<accession>P34806</accession>
<protein>
    <recommendedName>
        <fullName>Ferredoxin</fullName>
    </recommendedName>
</protein>
<name>FER_PSALA</name>